<proteinExistence type="inferred from homology"/>
<gene>
    <name evidence="2" type="primary">infB</name>
    <name type="ordered locus">Lreu_0699</name>
</gene>
<name>IF2_LIMRD</name>
<reference key="1">
    <citation type="journal article" date="2011" name="PLoS Genet.">
        <title>The evolution of host specialization in the vertebrate gut symbiont Lactobacillus reuteri.</title>
        <authorList>
            <person name="Frese S.A."/>
            <person name="Benson A.K."/>
            <person name="Tannock G.W."/>
            <person name="Loach D.M."/>
            <person name="Kim J."/>
            <person name="Zhang M."/>
            <person name="Oh P.L."/>
            <person name="Heng N.C."/>
            <person name="Patil P.B."/>
            <person name="Juge N."/>
            <person name="Mackenzie D.A."/>
            <person name="Pearson B.M."/>
            <person name="Lapidus A."/>
            <person name="Dalin E."/>
            <person name="Tice H."/>
            <person name="Goltsman E."/>
            <person name="Land M."/>
            <person name="Hauser L."/>
            <person name="Ivanova N."/>
            <person name="Kyrpides N.C."/>
            <person name="Walter J."/>
        </authorList>
    </citation>
    <scope>NUCLEOTIDE SEQUENCE [LARGE SCALE GENOMIC DNA]</scope>
    <source>
        <strain>DSM 20016</strain>
    </source>
</reference>
<comment type="function">
    <text evidence="2">One of the essential components for the initiation of protein synthesis. Protects formylmethionyl-tRNA from spontaneous hydrolysis and promotes its binding to the 30S ribosomal subunits. Also involved in the hydrolysis of GTP during the formation of the 70S ribosomal complex.</text>
</comment>
<comment type="subcellular location">
    <subcellularLocation>
        <location evidence="2">Cytoplasm</location>
    </subcellularLocation>
</comment>
<comment type="similarity">
    <text evidence="2">Belongs to the TRAFAC class translation factor GTPase superfamily. Classic translation factor GTPase family. IF-2 subfamily.</text>
</comment>
<keyword id="KW-0963">Cytoplasm</keyword>
<keyword id="KW-0342">GTP-binding</keyword>
<keyword id="KW-0396">Initiation factor</keyword>
<keyword id="KW-0547">Nucleotide-binding</keyword>
<keyword id="KW-0648">Protein biosynthesis</keyword>
<keyword id="KW-1185">Reference proteome</keyword>
<accession>A5VJE0</accession>
<sequence>MAKERIYELAKELKMPSKDLVNMANRQGMGVKSHMSSVTPDQAQQLRQLAKGGQKTTNNQHQPVKKNDGHNKQNNHQAQNHNQHHDHDKTQNERPQKKNNSRSNNGTKDNNQHQNNGGRFGGSLNNDQGRNGKRFNKKNKKNKKHNKNKRLREVAHKQPTQRKDKPLPEVLEYTDGMNAQDLGKILHRSPAEIVKKLFMLGVMINQNQSLDKDTIELLATDYGIEAKEKVQVDVSDIDKMFEDEQNNTEHQVTRPAVVTVMGHVDHGKTTLLDKLRHSHVTEHEAGGITQEIGAYQVHYNDQLITFLDTPGHAAFTEMRARGANITDITVLVVAADDGVMPQTVEAIHHAQAAQTPIIVAVNKIDKPGANPDRVTEELAKYNLIPEDWGGDTIFVKISAKFGKNLDELLDMILLQAEMLELKANPDQNAAGSVVEARLDQGRGSVATVLVQQGTLHVGDPIVVGNTFGRVRTMTNENGRRIKEATPSTPVEITGLNEVPEAGDRFVVFDDEKTARAAGEERAKRAMDKERQKTSHVTLDNLFATMKKGQMKTLPIIIKADVQGSVEALSQSLQKIKVDGVRVDIIHQAVGAINQSDVTLAEASNAVIIGFNVRPTAVAKTLADSNSIDIRLHRVIYDAIEEVEDAMKGMLEPVYKEETIGQVEVRQIYKASKVGTIAGGMVTSGKITRDAKVRLVRDGVVIYEGELGSLKRFKDDVKEVKQGYECGLTIENYNDIKEMDVIEAYKMKEVPVK</sequence>
<organism>
    <name type="scientific">Limosilactobacillus reuteri (strain DSM 20016)</name>
    <name type="common">Lactobacillus reuteri</name>
    <dbReference type="NCBI Taxonomy" id="557436"/>
    <lineage>
        <taxon>Bacteria</taxon>
        <taxon>Bacillati</taxon>
        <taxon>Bacillota</taxon>
        <taxon>Bacilli</taxon>
        <taxon>Lactobacillales</taxon>
        <taxon>Lactobacillaceae</taxon>
        <taxon>Limosilactobacillus</taxon>
    </lineage>
</organism>
<feature type="chain" id="PRO_1000057657" description="Translation initiation factor IF-2">
    <location>
        <begin position="1"/>
        <end position="752"/>
    </location>
</feature>
<feature type="domain" description="tr-type G">
    <location>
        <begin position="253"/>
        <end position="422"/>
    </location>
</feature>
<feature type="region of interest" description="Disordered" evidence="3">
    <location>
        <begin position="26"/>
        <end position="167"/>
    </location>
</feature>
<feature type="region of interest" description="G1" evidence="1">
    <location>
        <begin position="262"/>
        <end position="269"/>
    </location>
</feature>
<feature type="region of interest" description="G2" evidence="1">
    <location>
        <begin position="287"/>
        <end position="291"/>
    </location>
</feature>
<feature type="region of interest" description="G3" evidence="1">
    <location>
        <begin position="308"/>
        <end position="311"/>
    </location>
</feature>
<feature type="region of interest" description="G4" evidence="1">
    <location>
        <begin position="362"/>
        <end position="365"/>
    </location>
</feature>
<feature type="region of interest" description="G5" evidence="1">
    <location>
        <begin position="398"/>
        <end position="400"/>
    </location>
</feature>
<feature type="compositionally biased region" description="Polar residues" evidence="3">
    <location>
        <begin position="34"/>
        <end position="47"/>
    </location>
</feature>
<feature type="compositionally biased region" description="Low complexity" evidence="3">
    <location>
        <begin position="72"/>
        <end position="81"/>
    </location>
</feature>
<feature type="compositionally biased region" description="Basic and acidic residues" evidence="3">
    <location>
        <begin position="83"/>
        <end position="96"/>
    </location>
</feature>
<feature type="compositionally biased region" description="Polar residues" evidence="3">
    <location>
        <begin position="101"/>
        <end position="129"/>
    </location>
</feature>
<feature type="compositionally biased region" description="Basic residues" evidence="3">
    <location>
        <begin position="131"/>
        <end position="150"/>
    </location>
</feature>
<feature type="compositionally biased region" description="Basic and acidic residues" evidence="3">
    <location>
        <begin position="151"/>
        <end position="167"/>
    </location>
</feature>
<feature type="binding site" evidence="2">
    <location>
        <begin position="262"/>
        <end position="269"/>
    </location>
    <ligand>
        <name>GTP</name>
        <dbReference type="ChEBI" id="CHEBI:37565"/>
    </ligand>
</feature>
<feature type="binding site" evidence="2">
    <location>
        <begin position="308"/>
        <end position="312"/>
    </location>
    <ligand>
        <name>GTP</name>
        <dbReference type="ChEBI" id="CHEBI:37565"/>
    </ligand>
</feature>
<feature type="binding site" evidence="2">
    <location>
        <begin position="362"/>
        <end position="365"/>
    </location>
    <ligand>
        <name>GTP</name>
        <dbReference type="ChEBI" id="CHEBI:37565"/>
    </ligand>
</feature>
<dbReference type="EMBL" id="CP000705">
    <property type="protein sequence ID" value="ABQ82964.1"/>
    <property type="molecule type" value="Genomic_DNA"/>
</dbReference>
<dbReference type="RefSeq" id="WP_003668181.1">
    <property type="nucleotide sequence ID" value="NC_009513.1"/>
</dbReference>
<dbReference type="SMR" id="A5VJE0"/>
<dbReference type="STRING" id="557436.Lreu_0699"/>
<dbReference type="GeneID" id="77190754"/>
<dbReference type="KEGG" id="lre:Lreu_0699"/>
<dbReference type="PATRIC" id="fig|557436.17.peg.556"/>
<dbReference type="eggNOG" id="COG0532">
    <property type="taxonomic scope" value="Bacteria"/>
</dbReference>
<dbReference type="HOGENOM" id="CLU_006301_5_1_9"/>
<dbReference type="Proteomes" id="UP000001991">
    <property type="component" value="Chromosome"/>
</dbReference>
<dbReference type="GO" id="GO:0005829">
    <property type="term" value="C:cytosol"/>
    <property type="evidence" value="ECO:0007669"/>
    <property type="project" value="TreeGrafter"/>
</dbReference>
<dbReference type="GO" id="GO:0005525">
    <property type="term" value="F:GTP binding"/>
    <property type="evidence" value="ECO:0007669"/>
    <property type="project" value="UniProtKB-KW"/>
</dbReference>
<dbReference type="GO" id="GO:0003924">
    <property type="term" value="F:GTPase activity"/>
    <property type="evidence" value="ECO:0007669"/>
    <property type="project" value="UniProtKB-UniRule"/>
</dbReference>
<dbReference type="GO" id="GO:0003743">
    <property type="term" value="F:translation initiation factor activity"/>
    <property type="evidence" value="ECO:0007669"/>
    <property type="project" value="UniProtKB-UniRule"/>
</dbReference>
<dbReference type="CDD" id="cd01887">
    <property type="entry name" value="IF2_eIF5B"/>
    <property type="match status" value="1"/>
</dbReference>
<dbReference type="CDD" id="cd03702">
    <property type="entry name" value="IF2_mtIF2_II"/>
    <property type="match status" value="1"/>
</dbReference>
<dbReference type="CDD" id="cd03692">
    <property type="entry name" value="mtIF2_IVc"/>
    <property type="match status" value="1"/>
</dbReference>
<dbReference type="FunFam" id="2.40.30.10:FF:000007">
    <property type="entry name" value="Translation initiation factor IF-2"/>
    <property type="match status" value="1"/>
</dbReference>
<dbReference type="FunFam" id="2.40.30.10:FF:000008">
    <property type="entry name" value="Translation initiation factor IF-2"/>
    <property type="match status" value="1"/>
</dbReference>
<dbReference type="FunFam" id="3.40.50.10050:FF:000001">
    <property type="entry name" value="Translation initiation factor IF-2"/>
    <property type="match status" value="1"/>
</dbReference>
<dbReference type="FunFam" id="3.40.50.300:FF:000019">
    <property type="entry name" value="Translation initiation factor IF-2"/>
    <property type="match status" value="1"/>
</dbReference>
<dbReference type="Gene3D" id="1.10.10.2480">
    <property type="match status" value="1"/>
</dbReference>
<dbReference type="Gene3D" id="3.40.50.300">
    <property type="entry name" value="P-loop containing nucleotide triphosphate hydrolases"/>
    <property type="match status" value="1"/>
</dbReference>
<dbReference type="Gene3D" id="2.40.30.10">
    <property type="entry name" value="Translation factors"/>
    <property type="match status" value="2"/>
</dbReference>
<dbReference type="Gene3D" id="3.40.50.10050">
    <property type="entry name" value="Translation initiation factor IF- 2, domain 3"/>
    <property type="match status" value="1"/>
</dbReference>
<dbReference type="HAMAP" id="MF_00100_B">
    <property type="entry name" value="IF_2_B"/>
    <property type="match status" value="1"/>
</dbReference>
<dbReference type="InterPro" id="IPR053905">
    <property type="entry name" value="EF-G-like_DII"/>
</dbReference>
<dbReference type="InterPro" id="IPR004161">
    <property type="entry name" value="EFTu-like_2"/>
</dbReference>
<dbReference type="InterPro" id="IPR044145">
    <property type="entry name" value="IF2_II"/>
</dbReference>
<dbReference type="InterPro" id="IPR006847">
    <property type="entry name" value="IF2_N"/>
</dbReference>
<dbReference type="InterPro" id="IPR027417">
    <property type="entry name" value="P-loop_NTPase"/>
</dbReference>
<dbReference type="InterPro" id="IPR005225">
    <property type="entry name" value="Small_GTP-bd"/>
</dbReference>
<dbReference type="InterPro" id="IPR000795">
    <property type="entry name" value="T_Tr_GTP-bd_dom"/>
</dbReference>
<dbReference type="InterPro" id="IPR000178">
    <property type="entry name" value="TF_IF2_bacterial-like"/>
</dbReference>
<dbReference type="InterPro" id="IPR015760">
    <property type="entry name" value="TIF_IF2"/>
</dbReference>
<dbReference type="InterPro" id="IPR023115">
    <property type="entry name" value="TIF_IF2_dom3"/>
</dbReference>
<dbReference type="InterPro" id="IPR036925">
    <property type="entry name" value="TIF_IF2_dom3_sf"/>
</dbReference>
<dbReference type="InterPro" id="IPR009000">
    <property type="entry name" value="Transl_B-barrel_sf"/>
</dbReference>
<dbReference type="NCBIfam" id="TIGR00487">
    <property type="entry name" value="IF-2"/>
    <property type="match status" value="1"/>
</dbReference>
<dbReference type="NCBIfam" id="TIGR00231">
    <property type="entry name" value="small_GTP"/>
    <property type="match status" value="1"/>
</dbReference>
<dbReference type="PANTHER" id="PTHR43381:SF5">
    <property type="entry name" value="TR-TYPE G DOMAIN-CONTAINING PROTEIN"/>
    <property type="match status" value="1"/>
</dbReference>
<dbReference type="PANTHER" id="PTHR43381">
    <property type="entry name" value="TRANSLATION INITIATION FACTOR IF-2-RELATED"/>
    <property type="match status" value="1"/>
</dbReference>
<dbReference type="Pfam" id="PF22042">
    <property type="entry name" value="EF-G_D2"/>
    <property type="match status" value="1"/>
</dbReference>
<dbReference type="Pfam" id="PF00009">
    <property type="entry name" value="GTP_EFTU"/>
    <property type="match status" value="1"/>
</dbReference>
<dbReference type="Pfam" id="PF03144">
    <property type="entry name" value="GTP_EFTU_D2"/>
    <property type="match status" value="1"/>
</dbReference>
<dbReference type="Pfam" id="PF11987">
    <property type="entry name" value="IF-2"/>
    <property type="match status" value="1"/>
</dbReference>
<dbReference type="Pfam" id="PF04760">
    <property type="entry name" value="IF2_N"/>
    <property type="match status" value="2"/>
</dbReference>
<dbReference type="SUPFAM" id="SSF52156">
    <property type="entry name" value="Initiation factor IF2/eIF5b, domain 3"/>
    <property type="match status" value="1"/>
</dbReference>
<dbReference type="SUPFAM" id="SSF52540">
    <property type="entry name" value="P-loop containing nucleoside triphosphate hydrolases"/>
    <property type="match status" value="1"/>
</dbReference>
<dbReference type="SUPFAM" id="SSF50447">
    <property type="entry name" value="Translation proteins"/>
    <property type="match status" value="2"/>
</dbReference>
<dbReference type="PROSITE" id="PS51722">
    <property type="entry name" value="G_TR_2"/>
    <property type="match status" value="1"/>
</dbReference>
<dbReference type="PROSITE" id="PS01176">
    <property type="entry name" value="IF2"/>
    <property type="match status" value="1"/>
</dbReference>
<protein>
    <recommendedName>
        <fullName evidence="2">Translation initiation factor IF-2</fullName>
    </recommendedName>
</protein>
<evidence type="ECO:0000250" key="1"/>
<evidence type="ECO:0000255" key="2">
    <source>
        <dbReference type="HAMAP-Rule" id="MF_00100"/>
    </source>
</evidence>
<evidence type="ECO:0000256" key="3">
    <source>
        <dbReference type="SAM" id="MobiDB-lite"/>
    </source>
</evidence>